<protein>
    <recommendedName>
        <fullName>Lectin-like protein EP153R</fullName>
        <shortName>pEP153R</shortName>
    </recommendedName>
</protein>
<accession>Q65150</accession>
<evidence type="ECO:0000250" key="1">
    <source>
        <dbReference type="UniProtKB" id="P0CA64"/>
    </source>
</evidence>
<evidence type="ECO:0000255" key="2"/>
<evidence type="ECO:0000269" key="3">
    <source>
    </source>
</evidence>
<evidence type="ECO:0000269" key="4">
    <source>
    </source>
</evidence>
<evidence type="ECO:0000269" key="5">
    <source>
    </source>
</evidence>
<evidence type="ECO:0000305" key="6"/>
<organism>
    <name type="scientific">African swine fever virus (strain Badajoz 1971 Vero-adapted)</name>
    <name type="common">Ba71V</name>
    <name type="synonym">ASFV</name>
    <dbReference type="NCBI Taxonomy" id="10498"/>
    <lineage>
        <taxon>Viruses</taxon>
        <taxon>Varidnaviria</taxon>
        <taxon>Bamfordvirae</taxon>
        <taxon>Nucleocytoviricota</taxon>
        <taxon>Pokkesviricetes</taxon>
        <taxon>Asfuvirales</taxon>
        <taxon>Asfarviridae</taxon>
        <taxon>Asfivirus</taxon>
        <taxon>African swine fever virus</taxon>
    </lineage>
</organism>
<comment type="function">
    <text evidence="1 3 4 5">Down-regulates MHC-I expression by impairing the appropriate configuration or presentation into the plasma membrane of the latter (PubMed:21069396). Participates in viral hemadsorption, which may help viral spread (PubMed:10639320). Reduces the transactivating activity of host TP53, thus inhibiting apoptosis (PubMed:15262504). Non-essential for virus growth in swine macrophage cell cultures (By similarity).</text>
</comment>
<comment type="subunit">
    <text evidence="5">Homodimer.</text>
</comment>
<comment type="subcellular location">
    <subcellularLocation>
        <location evidence="3 5">Host endoplasmic reticulum membrane</location>
        <topology evidence="3">Single-pass type II membrane protein</topology>
    </subcellularLocation>
</comment>
<comment type="induction">
    <text evidence="3">Expressed in the early phase of the viral replicative cycle. Expressed in the late phase of the viral replicative cycle.</text>
</comment>
<comment type="similarity">
    <text evidence="6">Belongs to the asfivirus lectin-like protein family.</text>
</comment>
<organismHost>
    <name type="scientific">Ornithodoros</name>
    <name type="common">relapsing fever ticks</name>
    <dbReference type="NCBI Taxonomy" id="6937"/>
</organismHost>
<organismHost>
    <name type="scientific">Sus scrofa</name>
    <name type="common">Pig</name>
    <dbReference type="NCBI Taxonomy" id="9823"/>
</organismHost>
<reference key="1">
    <citation type="journal article" date="1995" name="Virology">
        <title>Analysis of the complete nucleotide sequence of African swine fever virus.</title>
        <authorList>
            <person name="Yanez R.J."/>
            <person name="Rodriguez J.M."/>
            <person name="Nogal M.L."/>
            <person name="Yuste L."/>
            <person name="Enriquez C."/>
            <person name="Rodriguez J.F."/>
            <person name="Vinuela E."/>
        </authorList>
    </citation>
    <scope>NUCLEOTIDE SEQUENCE [LARGE SCALE GENOMIC DNA]</scope>
</reference>
<reference key="2">
    <citation type="journal article" date="2000" name="Virology">
        <title>African swine fever virus EP153R open reading frame encodes a glycoprotein involved in the hemadsorption of infected cells.</title>
        <authorList>
            <person name="Galindo I."/>
            <person name="Almazan F."/>
            <person name="Bustos M.J."/>
            <person name="Vinuela E."/>
            <person name="Carrascosa A.L."/>
        </authorList>
    </citation>
    <scope>FUNCTION</scope>
    <scope>TOPOLOGY</scope>
    <scope>INDUCTION</scope>
    <scope>SUBCELLULAR LOCATION</scope>
</reference>
<reference key="3">
    <citation type="journal article" date="2004" name="Virology">
        <title>The C-type lectin homologue gene (EP153R) of African swine fever virus inhibits apoptosis both in virus infection and in heterologous expression.</title>
        <authorList>
            <person name="Hurtado C."/>
            <person name="Granja A.G."/>
            <person name="Bustos M.J."/>
            <person name="Nogal M.L."/>
            <person name="Gonzalez de Buitrago G."/>
            <person name="de Yebenes V.G."/>
            <person name="Salas M.L."/>
            <person name="Revilla Y."/>
            <person name="Carrascosa A.L."/>
        </authorList>
    </citation>
    <scope>FUNCTION</scope>
</reference>
<reference key="4">
    <citation type="journal article" date="2011" name="Arch. Virol.">
        <title>The African swine fever virus lectin EP153R modulates the surface membrane expression of MHC class I antigens.</title>
        <authorList>
            <person name="Hurtado C."/>
            <person name="Bustos M.J."/>
            <person name="Granja A.G."/>
            <person name="de Leon P."/>
            <person name="Sabina P."/>
            <person name="Lopez-Vinas E."/>
            <person name="Gomez-Puertas P."/>
            <person name="Revilla Y."/>
            <person name="Carrascosa A.L."/>
        </authorList>
    </citation>
    <scope>DISULFIDE BOND</scope>
    <scope>SUBUNIT</scope>
    <scope>FUNCTION</scope>
    <scope>MUTAGENESIS OF ARG-133</scope>
    <scope>SUBCELLULAR LOCATION</scope>
</reference>
<proteinExistence type="evidence at protein level"/>
<name>EP153_ASFB7</name>
<keyword id="KW-1015">Disulfide bond</keyword>
<keyword id="KW-0244">Early protein</keyword>
<keyword id="KW-0325">Glycoprotein</keyword>
<keyword id="KW-1038">Host endoplasmic reticulum</keyword>
<keyword id="KW-1043">Host membrane</keyword>
<keyword id="KW-0945">Host-virus interaction</keyword>
<keyword id="KW-0430">Lectin</keyword>
<keyword id="KW-0472">Membrane</keyword>
<keyword id="KW-1119">Modulation of host cell apoptosis by virus</keyword>
<keyword id="KW-1185">Reference proteome</keyword>
<keyword id="KW-0735">Signal-anchor</keyword>
<keyword id="KW-0812">Transmembrane</keyword>
<keyword id="KW-1133">Transmembrane helix</keyword>
<feature type="chain" id="PRO_0000379080" description="Lectin-like protein EP153R">
    <location>
        <begin position="1"/>
        <end position="153"/>
    </location>
</feature>
<feature type="topological domain" description="Cytoplasmic" evidence="3">
    <location>
        <begin position="1"/>
        <end position="30"/>
    </location>
</feature>
<feature type="transmembrane region" description="Helical" evidence="2">
    <location>
        <begin position="31"/>
        <end position="51"/>
    </location>
</feature>
<feature type="topological domain" description="Extracellular" evidence="3">
    <location>
        <begin position="52"/>
        <end position="153"/>
    </location>
</feature>
<feature type="glycosylation site" description="N-linked (GlcNAc...) asparagine; by host" evidence="2">
    <location>
        <position position="83"/>
    </location>
</feature>
<feature type="glycosylation site" description="N-linked (GlcNAc...) asparagine; by host" evidence="2">
    <location>
        <position position="89"/>
    </location>
</feature>
<feature type="glycosylation site" description="N-linked (GlcNAc...) asparagine; by host" evidence="2">
    <location>
        <position position="101"/>
    </location>
</feature>
<feature type="glycosylation site" description="N-linked (GlcNAc...) asparagine; by host" evidence="2">
    <location>
        <position position="107"/>
    </location>
</feature>
<feature type="glycosylation site" description="N-linked (GlcNAc...) asparagine; by host" evidence="2">
    <location>
        <position position="113"/>
    </location>
</feature>
<feature type="glycosylation site" description="N-linked (GlcNAc...) asparagine; by host" evidence="2">
    <location>
        <position position="120"/>
    </location>
</feature>
<feature type="glycosylation site" description="N-linked (GlcNAc...) asparagine; by host" evidence="2">
    <location>
        <position position="127"/>
    </location>
</feature>
<feature type="glycosylation site" description="N-linked (GlcNAc...) asparagine; by host" evidence="2">
    <location>
        <position position="143"/>
    </location>
</feature>
<feature type="disulfide bond" evidence="5">
    <location>
        <begin position="67"/>
        <end position="78"/>
    </location>
</feature>
<feature type="disulfide bond" evidence="5">
    <location>
        <begin position="97"/>
        <end position="151"/>
    </location>
</feature>
<feature type="mutagenesis site" description="Complete loss of down-regulation of MHC-I expression." evidence="5">
    <original>R</original>
    <variation>D</variation>
    <location>
        <position position="133"/>
    </location>
</feature>
<feature type="mutagenesis site" description="No effect on down-regulation of MHC-I expression." evidence="5">
    <original>R</original>
    <variation>K</variation>
    <location>
        <position position="133"/>
    </location>
</feature>
<gene>
    <name type="ordered locus">Ba71V-057</name>
    <name type="ORF">EP153R</name>
</gene>
<dbReference type="EMBL" id="U18466">
    <property type="protein sequence ID" value="AAA65287.1"/>
    <property type="molecule type" value="Genomic_DNA"/>
</dbReference>
<dbReference type="RefSeq" id="NP_042751.1">
    <property type="nucleotide sequence ID" value="NC_001659.2"/>
</dbReference>
<dbReference type="SMR" id="Q65150"/>
<dbReference type="DNASU" id="1488822"/>
<dbReference type="GeneID" id="22220439"/>
<dbReference type="KEGG" id="vg:22220439"/>
<dbReference type="Proteomes" id="UP000000624">
    <property type="component" value="Segment"/>
</dbReference>
<dbReference type="GO" id="GO:0044167">
    <property type="term" value="C:host cell endoplasmic reticulum membrane"/>
    <property type="evidence" value="ECO:0007669"/>
    <property type="project" value="UniProtKB-SubCell"/>
</dbReference>
<dbReference type="GO" id="GO:0016020">
    <property type="term" value="C:membrane"/>
    <property type="evidence" value="ECO:0007669"/>
    <property type="project" value="UniProtKB-KW"/>
</dbReference>
<dbReference type="GO" id="GO:0030246">
    <property type="term" value="F:carbohydrate binding"/>
    <property type="evidence" value="ECO:0007669"/>
    <property type="project" value="UniProtKB-KW"/>
</dbReference>
<dbReference type="GO" id="GO:0052150">
    <property type="term" value="P:symbiont-mediated perturbation of host apoptosis"/>
    <property type="evidence" value="ECO:0007669"/>
    <property type="project" value="UniProtKB-KW"/>
</dbReference>
<dbReference type="Gene3D" id="3.10.100.10">
    <property type="entry name" value="Mannose-Binding Protein A, subunit A"/>
    <property type="match status" value="1"/>
</dbReference>
<dbReference type="InterPro" id="IPR016186">
    <property type="entry name" value="C-type_lectin-like/link_sf"/>
</dbReference>
<dbReference type="InterPro" id="IPR016187">
    <property type="entry name" value="CTDL_fold"/>
</dbReference>
<dbReference type="Pfam" id="PF05473">
    <property type="entry name" value="UL45"/>
    <property type="match status" value="1"/>
</dbReference>
<dbReference type="SUPFAM" id="SSF56436">
    <property type="entry name" value="C-type lectin-like"/>
    <property type="match status" value="1"/>
</dbReference>
<sequence length="153" mass="18050">MYFKKKYIGLIDKNCEKKILDDSSTIKICYILIGILIGTNMITLIYNFIFWDNYIKCYRNNDKMFYCPNDWVGYNNICYYFSNGSFSKNYTAASNFCRQLNGTLANNDTNLLNLTKIYNNQSMYWVNNTVILRGDNKYSQKVNYTDLLFICGK</sequence>